<organism>
    <name type="scientific">Yersinia pestis bv. Antiqua (strain Nepal516)</name>
    <dbReference type="NCBI Taxonomy" id="377628"/>
    <lineage>
        <taxon>Bacteria</taxon>
        <taxon>Pseudomonadati</taxon>
        <taxon>Pseudomonadota</taxon>
        <taxon>Gammaproteobacteria</taxon>
        <taxon>Enterobacterales</taxon>
        <taxon>Yersiniaceae</taxon>
        <taxon>Yersinia</taxon>
    </lineage>
</organism>
<sequence>MSQSSASSIFTVSRLNQTVRELLEREMGQIWLTAEISNFSQPASGHWYFTLKDDRAQVRCAMFRNSNRRTTFRPQNGQQVLVRASITLYEPRGDYQLIAESMQPAGDGLLQQQFEQLKQQLAAEGLFDQSHKQPLPHPAKQVGVITSASGAALHDVLHVLQRRDPSLPVIIYPTSVQGVDAPLQIVRAIQLANLRAECDVLIVGRGGGSLEDLWSFNDERVARAIFNSHIPIVSAVGHETDVTIADFVADLRAPTPSAAAELVSRNQIELVRQIQGQQQRMEMAMDYYLAQRNQQFTRLEHRLQQQHPHLRLARQQTLLLKLQRRLEESAQTQIRLLSKRTERLQQRLQQVQPQGQIHRYNQRVQQQEYRLRQAVERQLNGYRQRFGIACSQLEAVSPLATLARGYSVTQTPAGALLKTTKQVQAGDKLTTRLQDGWVESEITQVTVAKKSRQKKVVTQ</sequence>
<name>EX7L_YERPN</name>
<gene>
    <name evidence="1" type="primary">xseA</name>
    <name type="ordered locus">YPN_1266</name>
    <name type="ORF">YP516_1391</name>
</gene>
<proteinExistence type="inferred from homology"/>
<evidence type="ECO:0000255" key="1">
    <source>
        <dbReference type="HAMAP-Rule" id="MF_00378"/>
    </source>
</evidence>
<protein>
    <recommendedName>
        <fullName evidence="1">Exodeoxyribonuclease 7 large subunit</fullName>
        <ecNumber evidence="1">3.1.11.6</ecNumber>
    </recommendedName>
    <alternativeName>
        <fullName evidence="1">Exodeoxyribonuclease VII large subunit</fullName>
        <shortName evidence="1">Exonuclease VII large subunit</shortName>
    </alternativeName>
</protein>
<keyword id="KW-0963">Cytoplasm</keyword>
<keyword id="KW-0269">Exonuclease</keyword>
<keyword id="KW-0378">Hydrolase</keyword>
<keyword id="KW-0540">Nuclease</keyword>
<comment type="function">
    <text evidence="1">Bidirectionally degrades single-stranded DNA into large acid-insoluble oligonucleotides, which are then degraded further into small acid-soluble oligonucleotides.</text>
</comment>
<comment type="catalytic activity">
    <reaction evidence="1">
        <text>Exonucleolytic cleavage in either 5'- to 3'- or 3'- to 5'-direction to yield nucleoside 5'-phosphates.</text>
        <dbReference type="EC" id="3.1.11.6"/>
    </reaction>
</comment>
<comment type="subunit">
    <text evidence="1">Heterooligomer composed of large and small subunits.</text>
</comment>
<comment type="subcellular location">
    <subcellularLocation>
        <location evidence="1">Cytoplasm</location>
    </subcellularLocation>
</comment>
<comment type="similarity">
    <text evidence="1">Belongs to the XseA family.</text>
</comment>
<dbReference type="EC" id="3.1.11.6" evidence="1"/>
<dbReference type="EMBL" id="CP000305">
    <property type="protein sequence ID" value="ABG17596.1"/>
    <property type="molecule type" value="Genomic_DNA"/>
</dbReference>
<dbReference type="EMBL" id="ACNQ01000008">
    <property type="protein sequence ID" value="EEO77711.1"/>
    <property type="molecule type" value="Genomic_DNA"/>
</dbReference>
<dbReference type="RefSeq" id="WP_002209810.1">
    <property type="nucleotide sequence ID" value="NZ_ACNQ01000008.1"/>
</dbReference>
<dbReference type="SMR" id="Q1CK84"/>
<dbReference type="GeneID" id="57975829"/>
<dbReference type="KEGG" id="ypn:YPN_1266"/>
<dbReference type="HOGENOM" id="CLU_023625_3_1_6"/>
<dbReference type="Proteomes" id="UP000008936">
    <property type="component" value="Chromosome"/>
</dbReference>
<dbReference type="GO" id="GO:0005737">
    <property type="term" value="C:cytoplasm"/>
    <property type="evidence" value="ECO:0007669"/>
    <property type="project" value="UniProtKB-SubCell"/>
</dbReference>
<dbReference type="GO" id="GO:0009318">
    <property type="term" value="C:exodeoxyribonuclease VII complex"/>
    <property type="evidence" value="ECO:0007669"/>
    <property type="project" value="InterPro"/>
</dbReference>
<dbReference type="GO" id="GO:0008855">
    <property type="term" value="F:exodeoxyribonuclease VII activity"/>
    <property type="evidence" value="ECO:0007669"/>
    <property type="project" value="UniProtKB-UniRule"/>
</dbReference>
<dbReference type="GO" id="GO:0003676">
    <property type="term" value="F:nucleic acid binding"/>
    <property type="evidence" value="ECO:0007669"/>
    <property type="project" value="InterPro"/>
</dbReference>
<dbReference type="GO" id="GO:0006308">
    <property type="term" value="P:DNA catabolic process"/>
    <property type="evidence" value="ECO:0007669"/>
    <property type="project" value="UniProtKB-UniRule"/>
</dbReference>
<dbReference type="CDD" id="cd04489">
    <property type="entry name" value="ExoVII_LU_OBF"/>
    <property type="match status" value="1"/>
</dbReference>
<dbReference type="HAMAP" id="MF_00378">
    <property type="entry name" value="Exonuc_7_L"/>
    <property type="match status" value="1"/>
</dbReference>
<dbReference type="InterPro" id="IPR003753">
    <property type="entry name" value="Exonuc_VII_L"/>
</dbReference>
<dbReference type="InterPro" id="IPR020579">
    <property type="entry name" value="Exonuc_VII_lsu_C"/>
</dbReference>
<dbReference type="InterPro" id="IPR025824">
    <property type="entry name" value="OB-fold_nuc-bd_dom"/>
</dbReference>
<dbReference type="NCBIfam" id="TIGR00237">
    <property type="entry name" value="xseA"/>
    <property type="match status" value="1"/>
</dbReference>
<dbReference type="PANTHER" id="PTHR30008">
    <property type="entry name" value="EXODEOXYRIBONUCLEASE 7 LARGE SUBUNIT"/>
    <property type="match status" value="1"/>
</dbReference>
<dbReference type="PANTHER" id="PTHR30008:SF0">
    <property type="entry name" value="EXODEOXYRIBONUCLEASE 7 LARGE SUBUNIT"/>
    <property type="match status" value="1"/>
</dbReference>
<dbReference type="Pfam" id="PF02601">
    <property type="entry name" value="Exonuc_VII_L"/>
    <property type="match status" value="1"/>
</dbReference>
<dbReference type="Pfam" id="PF13742">
    <property type="entry name" value="tRNA_anti_2"/>
    <property type="match status" value="1"/>
</dbReference>
<accession>Q1CK84</accession>
<accession>C4GRM0</accession>
<feature type="chain" id="PRO_0000273706" description="Exodeoxyribonuclease 7 large subunit">
    <location>
        <begin position="1"/>
        <end position="459"/>
    </location>
</feature>
<reference key="1">
    <citation type="journal article" date="2006" name="J. Bacteriol.">
        <title>Complete genome sequence of Yersinia pestis strains Antiqua and Nepal516: evidence of gene reduction in an emerging pathogen.</title>
        <authorList>
            <person name="Chain P.S.G."/>
            <person name="Hu P."/>
            <person name="Malfatti S.A."/>
            <person name="Radnedge L."/>
            <person name="Larimer F."/>
            <person name="Vergez L.M."/>
            <person name="Worsham P."/>
            <person name="Chu M.C."/>
            <person name="Andersen G.L."/>
        </authorList>
    </citation>
    <scope>NUCLEOTIDE SEQUENCE [LARGE SCALE GENOMIC DNA]</scope>
    <source>
        <strain>Nepal516</strain>
    </source>
</reference>
<reference key="2">
    <citation type="submission" date="2009-04" db="EMBL/GenBank/DDBJ databases">
        <title>Yersinia pestis Nepal516A whole genome shotgun sequencing project.</title>
        <authorList>
            <person name="Plunkett G. III"/>
            <person name="Anderson B.D."/>
            <person name="Baumler D.J."/>
            <person name="Burland V."/>
            <person name="Cabot E.L."/>
            <person name="Glasner J.D."/>
            <person name="Mau B."/>
            <person name="Neeno-Eckwall E."/>
            <person name="Perna N.T."/>
            <person name="Munk A.C."/>
            <person name="Tapia R."/>
            <person name="Green L.D."/>
            <person name="Rogers Y.C."/>
            <person name="Detter J.C."/>
            <person name="Bruce D.C."/>
            <person name="Brettin T.S."/>
        </authorList>
    </citation>
    <scope>NUCLEOTIDE SEQUENCE [LARGE SCALE GENOMIC DNA]</scope>
    <source>
        <strain>Nepal516</strain>
    </source>
</reference>